<reference key="1">
    <citation type="journal article" date="2004" name="Nature">
        <title>Genome evolution in yeasts.</title>
        <authorList>
            <person name="Dujon B."/>
            <person name="Sherman D."/>
            <person name="Fischer G."/>
            <person name="Durrens P."/>
            <person name="Casaregola S."/>
            <person name="Lafontaine I."/>
            <person name="de Montigny J."/>
            <person name="Marck C."/>
            <person name="Neuveglise C."/>
            <person name="Talla E."/>
            <person name="Goffard N."/>
            <person name="Frangeul L."/>
            <person name="Aigle M."/>
            <person name="Anthouard V."/>
            <person name="Babour A."/>
            <person name="Barbe V."/>
            <person name="Barnay S."/>
            <person name="Blanchin S."/>
            <person name="Beckerich J.-M."/>
            <person name="Beyne E."/>
            <person name="Bleykasten C."/>
            <person name="Boisrame A."/>
            <person name="Boyer J."/>
            <person name="Cattolico L."/>
            <person name="Confanioleri F."/>
            <person name="de Daruvar A."/>
            <person name="Despons L."/>
            <person name="Fabre E."/>
            <person name="Fairhead C."/>
            <person name="Ferry-Dumazet H."/>
            <person name="Groppi A."/>
            <person name="Hantraye F."/>
            <person name="Hennequin C."/>
            <person name="Jauniaux N."/>
            <person name="Joyet P."/>
            <person name="Kachouri R."/>
            <person name="Kerrest A."/>
            <person name="Koszul R."/>
            <person name="Lemaire M."/>
            <person name="Lesur I."/>
            <person name="Ma L."/>
            <person name="Muller H."/>
            <person name="Nicaud J.-M."/>
            <person name="Nikolski M."/>
            <person name="Oztas S."/>
            <person name="Ozier-Kalogeropoulos O."/>
            <person name="Pellenz S."/>
            <person name="Potier S."/>
            <person name="Richard G.-F."/>
            <person name="Straub M.-L."/>
            <person name="Suleau A."/>
            <person name="Swennen D."/>
            <person name="Tekaia F."/>
            <person name="Wesolowski-Louvel M."/>
            <person name="Westhof E."/>
            <person name="Wirth B."/>
            <person name="Zeniou-Meyer M."/>
            <person name="Zivanovic Y."/>
            <person name="Bolotin-Fukuhara M."/>
            <person name="Thierry A."/>
            <person name="Bouchier C."/>
            <person name="Caudron B."/>
            <person name="Scarpelli C."/>
            <person name="Gaillardin C."/>
            <person name="Weissenbach J."/>
            <person name="Wincker P."/>
            <person name="Souciet J.-L."/>
        </authorList>
    </citation>
    <scope>NUCLEOTIDE SEQUENCE [LARGE SCALE GENOMIC DNA]</scope>
    <source>
        <strain>CLIB 122 / E 150</strain>
    </source>
</reference>
<feature type="chain" id="PRO_0000206192" description="Rhomboid-type serine protease 2">
    <location>
        <begin position="1"/>
        <end position="297"/>
    </location>
</feature>
<feature type="transmembrane region" description="Helical" evidence="3">
    <location>
        <begin position="14"/>
        <end position="34"/>
    </location>
</feature>
<feature type="transmembrane region" description="Helical" evidence="3">
    <location>
        <begin position="60"/>
        <end position="80"/>
    </location>
</feature>
<feature type="transmembrane region" description="Helical" evidence="3">
    <location>
        <begin position="98"/>
        <end position="118"/>
    </location>
</feature>
<feature type="transmembrane region" description="Helical" evidence="3">
    <location>
        <begin position="120"/>
        <end position="140"/>
    </location>
</feature>
<feature type="transmembrane region" description="Helical" evidence="3">
    <location>
        <begin position="155"/>
        <end position="175"/>
    </location>
</feature>
<feature type="transmembrane region" description="Helical" evidence="3">
    <location>
        <begin position="179"/>
        <end position="199"/>
    </location>
</feature>
<feature type="region of interest" description="Disordered" evidence="4">
    <location>
        <begin position="268"/>
        <end position="297"/>
    </location>
</feature>
<feature type="compositionally biased region" description="Polar residues" evidence="4">
    <location>
        <begin position="275"/>
        <end position="297"/>
    </location>
</feature>
<feature type="active site" description="Nucleophile" evidence="2">
    <location>
        <position position="128"/>
    </location>
</feature>
<feature type="active site" evidence="2">
    <location>
        <position position="182"/>
    </location>
</feature>
<name>RBD2_YARLI</name>
<accession>Q6CDV6</accession>
<sequence>MAQFPLFQKFQKAIQHPPALSLGLPIFLTVIFLLSQRYVWIEDDLELRSTALTNFELNRISFYPLVHATWFHLLLNLVALQPIVSQFERVNGTVRTGIVLNILAVVTAIPWCLLSIGFFPDEAVLGSSAWIFSFMGYWAIRESSKQPTTQLAPNLVVPTWLLPIIYLVVIAIVIPSSSFIGHLLGLIAGWMMALGYLDVLIEPSSKVVLWIENKISRVIDLIPSSIVTFYREEGALDTRAAARADTNRSLSVSGGNFLGFQANSSQADLEAGTRSRGNSSVDPTTSFPGTGQTLGTQ</sequence>
<protein>
    <recommendedName>
        <fullName evidence="5">Rhomboid-type serine protease 2</fullName>
        <ecNumber evidence="2">3.4.21.105</ecNumber>
    </recommendedName>
    <alternativeName>
        <fullName evidence="5">Rhomboid protein 2</fullName>
    </alternativeName>
</protein>
<keyword id="KW-0333">Golgi apparatus</keyword>
<keyword id="KW-0378">Hydrolase</keyword>
<keyword id="KW-0472">Membrane</keyword>
<keyword id="KW-0645">Protease</keyword>
<keyword id="KW-1185">Reference proteome</keyword>
<keyword id="KW-0720">Serine protease</keyword>
<keyword id="KW-0812">Transmembrane</keyword>
<keyword id="KW-1133">Transmembrane helix</keyword>
<evidence type="ECO:0000250" key="1"/>
<evidence type="ECO:0000250" key="2">
    <source>
        <dbReference type="UniProtKB" id="O74926"/>
    </source>
</evidence>
<evidence type="ECO:0000255" key="3"/>
<evidence type="ECO:0000256" key="4">
    <source>
        <dbReference type="SAM" id="MobiDB-lite"/>
    </source>
</evidence>
<evidence type="ECO:0000305" key="5"/>
<gene>
    <name type="primary">RBD2</name>
    <name type="ordered locus">YALI0B20878g</name>
</gene>
<comment type="function">
    <text evidence="2">Probable rhomboid-type serine protease that catalyzes intramembrane proteolysis.</text>
</comment>
<comment type="catalytic activity">
    <reaction evidence="2">
        <text>Cleaves type-1 transmembrane domains using a catalytic dyad composed of serine and histidine that are contributed by different transmembrane domains.</text>
        <dbReference type="EC" id="3.4.21.105"/>
    </reaction>
</comment>
<comment type="subcellular location">
    <subcellularLocation>
        <location evidence="1">Golgi apparatus membrane</location>
        <topology evidence="1">Multi-pass membrane protein</topology>
    </subcellularLocation>
    <subcellularLocation>
        <location evidence="1">Golgi apparatus</location>
        <location evidence="1">cis-Golgi network membrane</location>
        <topology evidence="1">Multi-pass membrane protein</topology>
    </subcellularLocation>
</comment>
<comment type="similarity">
    <text evidence="5">Belongs to the peptidase S54 family.</text>
</comment>
<proteinExistence type="inferred from homology"/>
<organism>
    <name type="scientific">Yarrowia lipolytica (strain CLIB 122 / E 150)</name>
    <name type="common">Yeast</name>
    <name type="synonym">Candida lipolytica</name>
    <dbReference type="NCBI Taxonomy" id="284591"/>
    <lineage>
        <taxon>Eukaryota</taxon>
        <taxon>Fungi</taxon>
        <taxon>Dikarya</taxon>
        <taxon>Ascomycota</taxon>
        <taxon>Saccharomycotina</taxon>
        <taxon>Dipodascomycetes</taxon>
        <taxon>Dipodascales</taxon>
        <taxon>Dipodascales incertae sedis</taxon>
        <taxon>Yarrowia</taxon>
    </lineage>
</organism>
<dbReference type="EC" id="3.4.21.105" evidence="2"/>
<dbReference type="EMBL" id="CR382128">
    <property type="protein sequence ID" value="CAG83409.1"/>
    <property type="molecule type" value="Genomic_DNA"/>
</dbReference>
<dbReference type="RefSeq" id="XP_501156.1">
    <property type="nucleotide sequence ID" value="XM_501156.1"/>
</dbReference>
<dbReference type="SMR" id="Q6CDV6"/>
<dbReference type="FunCoup" id="Q6CDV6">
    <property type="interactions" value="57"/>
</dbReference>
<dbReference type="STRING" id="284591.Q6CDV6"/>
<dbReference type="EnsemblFungi" id="CAG83409">
    <property type="protein sequence ID" value="CAG83409"/>
    <property type="gene ID" value="YALI0_B20878g"/>
</dbReference>
<dbReference type="KEGG" id="yli:2907094"/>
<dbReference type="VEuPathDB" id="FungiDB:YALI0_B20878g"/>
<dbReference type="HOGENOM" id="CLU_071084_0_0_1"/>
<dbReference type="InParanoid" id="Q6CDV6"/>
<dbReference type="OMA" id="NTYPIVH"/>
<dbReference type="OrthoDB" id="125305at4891"/>
<dbReference type="Proteomes" id="UP000001300">
    <property type="component" value="Chromosome B"/>
</dbReference>
<dbReference type="GO" id="GO:0000139">
    <property type="term" value="C:Golgi membrane"/>
    <property type="evidence" value="ECO:0007669"/>
    <property type="project" value="UniProtKB-SubCell"/>
</dbReference>
<dbReference type="GO" id="GO:0004252">
    <property type="term" value="F:serine-type endopeptidase activity"/>
    <property type="evidence" value="ECO:0000318"/>
    <property type="project" value="GO_Central"/>
</dbReference>
<dbReference type="GO" id="GO:0006508">
    <property type="term" value="P:proteolysis"/>
    <property type="evidence" value="ECO:0007669"/>
    <property type="project" value="UniProtKB-KW"/>
</dbReference>
<dbReference type="Gene3D" id="1.20.1540.10">
    <property type="entry name" value="Rhomboid-like"/>
    <property type="match status" value="1"/>
</dbReference>
<dbReference type="InterPro" id="IPR022764">
    <property type="entry name" value="Peptidase_S54_rhomboid_dom"/>
</dbReference>
<dbReference type="InterPro" id="IPR035952">
    <property type="entry name" value="Rhomboid-like_sf"/>
</dbReference>
<dbReference type="PANTHER" id="PTHR43066:SF1">
    <property type="entry name" value="RHOMBOID PROTEIN 2"/>
    <property type="match status" value="1"/>
</dbReference>
<dbReference type="PANTHER" id="PTHR43066">
    <property type="entry name" value="RHOMBOID-RELATED PROTEIN"/>
    <property type="match status" value="1"/>
</dbReference>
<dbReference type="Pfam" id="PF01694">
    <property type="entry name" value="Rhomboid"/>
    <property type="match status" value="1"/>
</dbReference>
<dbReference type="SUPFAM" id="SSF144091">
    <property type="entry name" value="Rhomboid-like"/>
    <property type="match status" value="1"/>
</dbReference>